<name>MADS5_ORYSJ</name>
<gene>
    <name type="primary">MADS5</name>
    <name type="ordered locus">Os06g0162800</name>
    <name type="ordered locus">LOC_Os06g06750</name>
    <name type="ORF">OsJ_019405</name>
    <name type="ORF">P0681F10.39</name>
</gene>
<keyword id="KW-0217">Developmental protein</keyword>
<keyword id="KW-0221">Differentiation</keyword>
<keyword id="KW-0238">DNA-binding</keyword>
<keyword id="KW-0287">Flowering</keyword>
<keyword id="KW-0539">Nucleus</keyword>
<keyword id="KW-1185">Reference proteome</keyword>
<keyword id="KW-0804">Transcription</keyword>
<keyword id="KW-0805">Transcription regulation</keyword>
<proteinExistence type="evidence at protein level"/>
<evidence type="ECO:0000255" key="1">
    <source>
        <dbReference type="PROSITE-ProRule" id="PRU00251"/>
    </source>
</evidence>
<evidence type="ECO:0000255" key="2">
    <source>
        <dbReference type="PROSITE-ProRule" id="PRU00629"/>
    </source>
</evidence>
<evidence type="ECO:0000269" key="3">
    <source>
    </source>
</evidence>
<evidence type="ECO:0000269" key="4">
    <source>
    </source>
</evidence>
<evidence type="ECO:0000269" key="5">
    <source ref="8"/>
</evidence>
<evidence type="ECO:0000305" key="6"/>
<protein>
    <recommendedName>
        <fullName>MADS-box transcription factor 5</fullName>
    </recommendedName>
    <alternativeName>
        <fullName>FDRMADS2</fullName>
    </alternativeName>
    <alternativeName>
        <fullName>OsMADS5</fullName>
    </alternativeName>
</protein>
<accession>Q0DEB8</accession>
<accession>B7E9I3</accession>
<accession>O03999</accession>
<accession>Q7GCP2</accession>
<accession>Q9SWQ4</accession>
<organism>
    <name type="scientific">Oryza sativa subsp. japonica</name>
    <name type="common">Rice</name>
    <dbReference type="NCBI Taxonomy" id="39947"/>
    <lineage>
        <taxon>Eukaryota</taxon>
        <taxon>Viridiplantae</taxon>
        <taxon>Streptophyta</taxon>
        <taxon>Embryophyta</taxon>
        <taxon>Tracheophyta</taxon>
        <taxon>Spermatophyta</taxon>
        <taxon>Magnoliopsida</taxon>
        <taxon>Liliopsida</taxon>
        <taxon>Poales</taxon>
        <taxon>Poaceae</taxon>
        <taxon>BOP clade</taxon>
        <taxon>Oryzoideae</taxon>
        <taxon>Oryzeae</taxon>
        <taxon>Oryzinae</taxon>
        <taxon>Oryza</taxon>
        <taxon>Oryza sativa</taxon>
    </lineage>
</organism>
<sequence>MGRGKVELKRIENKISRQVTFAKRRNGLLKKAYELSVLCDAEVALIIFSTRGRLFEFSTSSCMYKTLERYRSCNYNLNSCEASAALETELSNYQEYLKLKTRVEFLQTTQRNLLGEDLVPLSLKELEQLENQIEISLMNIRSSKNQQLLDQVFELKRKEQQLQDANKDLKRKIQETSGENMLHISCQDVGPSGHASEANQEFLHHAICDPSLHIGYQAYMDHLNQ</sequence>
<dbReference type="EMBL" id="U78890">
    <property type="protein sequence ID" value="AAB71434.1"/>
    <property type="molecule type" value="mRNA"/>
</dbReference>
<dbReference type="EMBL" id="AB026295">
    <property type="protein sequence ID" value="BAA81865.1"/>
    <property type="molecule type" value="Genomic_DNA"/>
</dbReference>
<dbReference type="EMBL" id="AP008212">
    <property type="protein sequence ID" value="BAF18805.1"/>
    <property type="molecule type" value="Genomic_DNA"/>
</dbReference>
<dbReference type="EMBL" id="AP014962">
    <property type="protein sequence ID" value="BAS96303.1"/>
    <property type="molecule type" value="Genomic_DNA"/>
</dbReference>
<dbReference type="EMBL" id="CM000143">
    <property type="protein sequence ID" value="EAZ35922.1"/>
    <property type="molecule type" value="Genomic_DNA"/>
</dbReference>
<dbReference type="EMBL" id="AK064184">
    <property type="protein sequence ID" value="BAG89030.1"/>
    <property type="molecule type" value="mRNA"/>
</dbReference>
<dbReference type="PIR" id="T04168">
    <property type="entry name" value="T04168"/>
</dbReference>
<dbReference type="RefSeq" id="XP_015641896.1">
    <property type="nucleotide sequence ID" value="XM_015786410.1"/>
</dbReference>
<dbReference type="SMR" id="Q0DEB8"/>
<dbReference type="FunCoup" id="Q0DEB8">
    <property type="interactions" value="15"/>
</dbReference>
<dbReference type="IntAct" id="Q0DEB8">
    <property type="interactions" value="7"/>
</dbReference>
<dbReference type="STRING" id="39947.Q0DEB8"/>
<dbReference type="PaxDb" id="39947-Q0DEB8"/>
<dbReference type="EnsemblPlants" id="Os06t0162800-01">
    <property type="protein sequence ID" value="Os06t0162800-01"/>
    <property type="gene ID" value="Os06g0162800"/>
</dbReference>
<dbReference type="Gramene" id="Os06t0162800-01">
    <property type="protein sequence ID" value="Os06t0162800-01"/>
    <property type="gene ID" value="Os06g0162800"/>
</dbReference>
<dbReference type="KEGG" id="dosa:Os06g0162800"/>
<dbReference type="eggNOG" id="KOG0014">
    <property type="taxonomic scope" value="Eukaryota"/>
</dbReference>
<dbReference type="HOGENOM" id="CLU_053053_0_2_1"/>
<dbReference type="InParanoid" id="Q0DEB8"/>
<dbReference type="OMA" id="HASEDNQ"/>
<dbReference type="OrthoDB" id="1898716at2759"/>
<dbReference type="Proteomes" id="UP000000763">
    <property type="component" value="Chromosome 6"/>
</dbReference>
<dbReference type="Proteomes" id="UP000007752">
    <property type="component" value="Chromosome 6"/>
</dbReference>
<dbReference type="Proteomes" id="UP000059680">
    <property type="component" value="Chromosome 6"/>
</dbReference>
<dbReference type="GO" id="GO:0005634">
    <property type="term" value="C:nucleus"/>
    <property type="evidence" value="ECO:0007669"/>
    <property type="project" value="UniProtKB-SubCell"/>
</dbReference>
<dbReference type="GO" id="GO:0000981">
    <property type="term" value="F:DNA-binding transcription factor activity, RNA polymerase II-specific"/>
    <property type="evidence" value="ECO:0000318"/>
    <property type="project" value="GO_Central"/>
</dbReference>
<dbReference type="GO" id="GO:0046983">
    <property type="term" value="F:protein dimerization activity"/>
    <property type="evidence" value="ECO:0007669"/>
    <property type="project" value="InterPro"/>
</dbReference>
<dbReference type="GO" id="GO:0000978">
    <property type="term" value="F:RNA polymerase II cis-regulatory region sequence-specific DNA binding"/>
    <property type="evidence" value="ECO:0000318"/>
    <property type="project" value="GO_Central"/>
</dbReference>
<dbReference type="GO" id="GO:0030154">
    <property type="term" value="P:cell differentiation"/>
    <property type="evidence" value="ECO:0007669"/>
    <property type="project" value="UniProtKB-KW"/>
</dbReference>
<dbReference type="GO" id="GO:0009908">
    <property type="term" value="P:flower development"/>
    <property type="evidence" value="ECO:0007669"/>
    <property type="project" value="UniProtKB-KW"/>
</dbReference>
<dbReference type="GO" id="GO:0045944">
    <property type="term" value="P:positive regulation of transcription by RNA polymerase II"/>
    <property type="evidence" value="ECO:0007669"/>
    <property type="project" value="InterPro"/>
</dbReference>
<dbReference type="GO" id="GO:0006357">
    <property type="term" value="P:regulation of transcription by RNA polymerase II"/>
    <property type="evidence" value="ECO:0000318"/>
    <property type="project" value="GO_Central"/>
</dbReference>
<dbReference type="CDD" id="cd00265">
    <property type="entry name" value="MADS_MEF2_like"/>
    <property type="match status" value="1"/>
</dbReference>
<dbReference type="FunFam" id="3.40.1810.10:FF:000008">
    <property type="entry name" value="MADS-box transcription factor 1"/>
    <property type="match status" value="1"/>
</dbReference>
<dbReference type="Gene3D" id="3.40.1810.10">
    <property type="entry name" value="Transcription factor, MADS-box"/>
    <property type="match status" value="1"/>
</dbReference>
<dbReference type="InterPro" id="IPR050142">
    <property type="entry name" value="MADS-box/MEF2_TF"/>
</dbReference>
<dbReference type="InterPro" id="IPR033896">
    <property type="entry name" value="MEF2-like_N"/>
</dbReference>
<dbReference type="InterPro" id="IPR002487">
    <property type="entry name" value="TF_Kbox"/>
</dbReference>
<dbReference type="InterPro" id="IPR002100">
    <property type="entry name" value="TF_MADSbox"/>
</dbReference>
<dbReference type="InterPro" id="IPR036879">
    <property type="entry name" value="TF_MADSbox_sf"/>
</dbReference>
<dbReference type="PANTHER" id="PTHR48019">
    <property type="entry name" value="SERUM RESPONSE FACTOR HOMOLOG"/>
    <property type="match status" value="1"/>
</dbReference>
<dbReference type="Pfam" id="PF01486">
    <property type="entry name" value="K-box"/>
    <property type="match status" value="1"/>
</dbReference>
<dbReference type="Pfam" id="PF00319">
    <property type="entry name" value="SRF-TF"/>
    <property type="match status" value="1"/>
</dbReference>
<dbReference type="PRINTS" id="PR00404">
    <property type="entry name" value="MADSDOMAIN"/>
</dbReference>
<dbReference type="SMART" id="SM00432">
    <property type="entry name" value="MADS"/>
    <property type="match status" value="1"/>
</dbReference>
<dbReference type="SUPFAM" id="SSF55455">
    <property type="entry name" value="SRF-like"/>
    <property type="match status" value="1"/>
</dbReference>
<dbReference type="PROSITE" id="PS51297">
    <property type="entry name" value="K_BOX"/>
    <property type="match status" value="1"/>
</dbReference>
<dbReference type="PROSITE" id="PS00350">
    <property type="entry name" value="MADS_BOX_1"/>
    <property type="match status" value="1"/>
</dbReference>
<dbReference type="PROSITE" id="PS50066">
    <property type="entry name" value="MADS_BOX_2"/>
    <property type="match status" value="1"/>
</dbReference>
<feature type="chain" id="PRO_0000229894" description="MADS-box transcription factor 5">
    <location>
        <begin position="1"/>
        <end position="225"/>
    </location>
</feature>
<feature type="domain" description="MADS-box" evidence="1">
    <location>
        <begin position="1"/>
        <end position="61"/>
    </location>
</feature>
<feature type="domain" description="K-box" evidence="2">
    <location>
        <begin position="89"/>
        <end position="179"/>
    </location>
</feature>
<reference key="1">
    <citation type="journal article" date="1997" name="Mol. Cells">
        <title>Isolation and characterization of a rice MADS box gene belonging to the AGL2 gene family.</title>
        <authorList>
            <person name="Kang H.-G."/>
            <person name="An G."/>
        </authorList>
    </citation>
    <scope>NUCLEOTIDE SEQUENCE [MRNA]</scope>
    <scope>FUNCTION</scope>
    <scope>TISSUE SPECIFICITY</scope>
    <source>
        <strain>cv. M201</strain>
    </source>
</reference>
<reference key="2">
    <citation type="journal article" date="2005" name="Nature">
        <title>The map-based sequence of the rice genome.</title>
        <authorList>
            <consortium name="International rice genome sequencing project (IRGSP)"/>
        </authorList>
    </citation>
    <scope>NUCLEOTIDE SEQUENCE [LARGE SCALE GENOMIC DNA]</scope>
    <source>
        <strain>cv. Nipponbare</strain>
    </source>
</reference>
<reference key="3">
    <citation type="journal article" date="2008" name="Nucleic Acids Res.">
        <title>The rice annotation project database (RAP-DB): 2008 update.</title>
        <authorList>
            <consortium name="The rice annotation project (RAP)"/>
        </authorList>
    </citation>
    <scope>GENOME REANNOTATION</scope>
    <source>
        <strain>cv. Nipponbare</strain>
    </source>
</reference>
<reference key="4">
    <citation type="journal article" date="2013" name="Rice">
        <title>Improvement of the Oryza sativa Nipponbare reference genome using next generation sequence and optical map data.</title>
        <authorList>
            <person name="Kawahara Y."/>
            <person name="de la Bastide M."/>
            <person name="Hamilton J.P."/>
            <person name="Kanamori H."/>
            <person name="McCombie W.R."/>
            <person name="Ouyang S."/>
            <person name="Schwartz D.C."/>
            <person name="Tanaka T."/>
            <person name="Wu J."/>
            <person name="Zhou S."/>
            <person name="Childs K.L."/>
            <person name="Davidson R.M."/>
            <person name="Lin H."/>
            <person name="Quesada-Ocampo L."/>
            <person name="Vaillancourt B."/>
            <person name="Sakai H."/>
            <person name="Lee S.S."/>
            <person name="Kim J."/>
            <person name="Numa H."/>
            <person name="Itoh T."/>
            <person name="Buell C.R."/>
            <person name="Matsumoto T."/>
        </authorList>
    </citation>
    <scope>GENOME REANNOTATION</scope>
    <source>
        <strain>cv. Nipponbare</strain>
    </source>
</reference>
<reference key="5">
    <citation type="journal article" date="2005" name="PLoS Biol.">
        <title>The genomes of Oryza sativa: a history of duplications.</title>
        <authorList>
            <person name="Yu J."/>
            <person name="Wang J."/>
            <person name="Lin W."/>
            <person name="Li S."/>
            <person name="Li H."/>
            <person name="Zhou J."/>
            <person name="Ni P."/>
            <person name="Dong W."/>
            <person name="Hu S."/>
            <person name="Zeng C."/>
            <person name="Zhang J."/>
            <person name="Zhang Y."/>
            <person name="Li R."/>
            <person name="Xu Z."/>
            <person name="Li S."/>
            <person name="Li X."/>
            <person name="Zheng H."/>
            <person name="Cong L."/>
            <person name="Lin L."/>
            <person name="Yin J."/>
            <person name="Geng J."/>
            <person name="Li G."/>
            <person name="Shi J."/>
            <person name="Liu J."/>
            <person name="Lv H."/>
            <person name="Li J."/>
            <person name="Wang J."/>
            <person name="Deng Y."/>
            <person name="Ran L."/>
            <person name="Shi X."/>
            <person name="Wang X."/>
            <person name="Wu Q."/>
            <person name="Li C."/>
            <person name="Ren X."/>
            <person name="Wang J."/>
            <person name="Wang X."/>
            <person name="Li D."/>
            <person name="Liu D."/>
            <person name="Zhang X."/>
            <person name="Ji Z."/>
            <person name="Zhao W."/>
            <person name="Sun Y."/>
            <person name="Zhang Z."/>
            <person name="Bao J."/>
            <person name="Han Y."/>
            <person name="Dong L."/>
            <person name="Ji J."/>
            <person name="Chen P."/>
            <person name="Wu S."/>
            <person name="Liu J."/>
            <person name="Xiao Y."/>
            <person name="Bu D."/>
            <person name="Tan J."/>
            <person name="Yang L."/>
            <person name="Ye C."/>
            <person name="Zhang J."/>
            <person name="Xu J."/>
            <person name="Zhou Y."/>
            <person name="Yu Y."/>
            <person name="Zhang B."/>
            <person name="Zhuang S."/>
            <person name="Wei H."/>
            <person name="Liu B."/>
            <person name="Lei M."/>
            <person name="Yu H."/>
            <person name="Li Y."/>
            <person name="Xu H."/>
            <person name="Wei S."/>
            <person name="He X."/>
            <person name="Fang L."/>
            <person name="Zhang Z."/>
            <person name="Zhang Y."/>
            <person name="Huang X."/>
            <person name="Su Z."/>
            <person name="Tong W."/>
            <person name="Li J."/>
            <person name="Tong Z."/>
            <person name="Li S."/>
            <person name="Ye J."/>
            <person name="Wang L."/>
            <person name="Fang L."/>
            <person name="Lei T."/>
            <person name="Chen C.-S."/>
            <person name="Chen H.-C."/>
            <person name="Xu Z."/>
            <person name="Li H."/>
            <person name="Huang H."/>
            <person name="Zhang F."/>
            <person name="Xu H."/>
            <person name="Li N."/>
            <person name="Zhao C."/>
            <person name="Li S."/>
            <person name="Dong L."/>
            <person name="Huang Y."/>
            <person name="Li L."/>
            <person name="Xi Y."/>
            <person name="Qi Q."/>
            <person name="Li W."/>
            <person name="Zhang B."/>
            <person name="Hu W."/>
            <person name="Zhang Y."/>
            <person name="Tian X."/>
            <person name="Jiao Y."/>
            <person name="Liang X."/>
            <person name="Jin J."/>
            <person name="Gao L."/>
            <person name="Zheng W."/>
            <person name="Hao B."/>
            <person name="Liu S.-M."/>
            <person name="Wang W."/>
            <person name="Yuan L."/>
            <person name="Cao M."/>
            <person name="McDermott J."/>
            <person name="Samudrala R."/>
            <person name="Wang J."/>
            <person name="Wong G.K.-S."/>
            <person name="Yang H."/>
        </authorList>
    </citation>
    <scope>NUCLEOTIDE SEQUENCE [LARGE SCALE GENOMIC DNA]</scope>
    <source>
        <strain>cv. Nipponbare</strain>
    </source>
</reference>
<reference key="6">
    <citation type="journal article" date="2003" name="Science">
        <title>Collection, mapping, and annotation of over 28,000 cDNA clones from japonica rice.</title>
        <authorList>
            <consortium name="The rice full-length cDNA consortium"/>
        </authorList>
    </citation>
    <scope>NUCLEOTIDE SEQUENCE [LARGE SCALE MRNA]</scope>
    <source>
        <strain>cv. Nipponbare</strain>
    </source>
</reference>
<reference key="7">
    <citation type="journal article" date="1999" name="Plant Physiol.">
        <title>Determination of the motif responsible for interaction between the rice APETALA1/AGAMOUS-LIKE9 family proteins using a yeast two-hybrid system.</title>
        <authorList>
            <person name="Moon Y.-H."/>
            <person name="Kang H.-G."/>
            <person name="Jung J.-Y."/>
            <person name="Jeon J.-S."/>
            <person name="Sung S.-K."/>
            <person name="An G."/>
        </authorList>
    </citation>
    <scope>INTERACTION WITH MADS6</scope>
</reference>
<reference key="8">
    <citation type="journal article" date="2000" name="Mol. Breed.">
        <title>Production of transgenic rice plants showing reduced heading date and plant height by ectopic expression of rice MADS-box genes.</title>
        <authorList>
            <person name="Jeon J.-S."/>
            <person name="Lee S."/>
            <person name="Nam J."/>
            <person name="Jung K.-H."/>
            <person name="Yang W.-S."/>
            <person name="Yi G.-H."/>
            <person name="Oh B.-G."/>
            <person name="An G."/>
        </authorList>
        <dbReference type="AGRICOLA" id="IND22436162"/>
    </citation>
    <scope>FUNCTION</scope>
</reference>
<reference key="9">
    <citation type="journal article" date="2005" name="Plant Mol. Biol.">
        <title>Conservation of the E-function for floral organ identity in rice revealed by the analysis of tissue culture-induced loss-of-function mutants of the OsMADS1 gene.</title>
        <authorList>
            <person name="Agrawal G.K."/>
            <person name="Abe K."/>
            <person name="Yamazaki M."/>
            <person name="Miyao A."/>
            <person name="Hirochika H."/>
        </authorList>
    </citation>
    <scope>FUNCTION</scope>
</reference>
<comment type="function">
    <text evidence="3 4 5">Probable transcription factor. May be involved in the control of flowering time.</text>
</comment>
<comment type="subunit">
    <text>May interact with the K-box of MADS6.</text>
</comment>
<comment type="interaction">
    <interactant intactId="EBI-627927">
        <id>Q0DEB8</id>
    </interactant>
    <interactant intactId="EBI-627980">
        <id>Q6EU39</id>
        <label>MADS6</label>
    </interactant>
    <organismsDiffer>false</organismsDiffer>
    <experiments>3</experiments>
</comment>
<comment type="subcellular location">
    <subcellularLocation>
        <location evidence="6">Nucleus</location>
    </subcellularLocation>
</comment>
<comment type="tissue specificity">
    <text evidence="4">Expressed in anthers. Weakly expressed in carpels.</text>
</comment>